<sequence length="1193" mass="129206">MHGEVSGPAGTPGYSIAIVTLDAHAAGPAARIAPRLQQDFPGLTLSIHAAAEWAEKPEALAAAREAIGRADIVIANLLFIEEHINAVLPELQAARERVDAFVGMIADPSIVKLTKMGDLDMQKPASGPMALLKKLRGASKEQGNSGESQMRMLRTIPKMLKFVPGKAQDLRAWFLSMQYWLGGSDDNLEQMVRYLVSRYSANRAWHRIHAKAPIEYPEVGLYHPSLPDRITTDPNDLPRPAGAKVTVGLLMLRSYILASDTAHYDAVIEAFERKGIAVLPAFAGGLDGRPAIDAYFHDKLGTTIDAMVSLTGFSLVGGPAYNDSHAAIEALKGLDVPYIAAHPLEFQTLGQWAQAGGGLGPVETTMLVALPEIDGATNPTVFAGRHDLSGCTGCPGGCKATAQAAECRAMSPCHERIQTLAEKTLRLALLRRSKIAERRVGVVLYGFPPNAGAVGTAAYLAVFESLFNVLNAMKREGYQLEVPESVQALRDAVLGGTASQYGQPANIAAHVSAEKIVSGTPWLADIEKAWGAAPGRIQSDGRGVYILGQQFGNVFVGVQPVFGYEGDPMRLLFEKGFAPTHAFSVFYRWLREDFGADVLLHFGMHGALEFMPGKQAGMSGACWPDRLIGALPNVYLYAANNPSEASLAKRRSNAITVTHLTPPLAKAGLYRGLQDLKDSLTRYRQLAPDAPEREELSLLIGEQARAVNLDMVDVDTMWLKLLETEGSLITDGLHVVGRPMTEEQIADNIALMPEMSSERRAEVEGMLRQETEIAGLLRALGGHYMEPVPGGDLIRAPEILPTGRNIHAFDPFRMPTAYAIQDGAAQAQRLLDAHPKLPETVALVLWGSDNIKSDGGPIAQALALMGARPRFDHYGRLAGADLIPLSELGRPRIDVIMTLSGIFRDLLPLQTRMLAEAAWKAANAEGEPLAQNFIRAHALSYAQEMGVDMETASLRVFSNAEGAYGSNVNVLVGSSAFGEEDELADAYEARKSFAYGRSGKPVQNAALLQKSLKTVDVAYQNLESVELGVTTVDHYFDTLGGIARAVKRARGEEASVYIGDQTRGGGTVRTLKDQIALETRARSLNPKYYEGLLKHGAEGVRQIEAQVTNTLGWSATTQQVEPWVYQRLSETFVLDEAMRRRLAELNPEASVRMAERLLEASARNYWQPDAETLAALQGAADELEDRLEGIAAE</sequence>
<proteinExistence type="inferred from homology"/>
<comment type="function">
    <text>Involved in bacteriochlorophyll pigment biosynthesis; introduces a magnesium ion into protoporphyrin IX to yield Mg-protoroporphyrin IX.</text>
</comment>
<comment type="catalytic activity">
    <reaction>
        <text>protoporphyrin IX + Mg(2+) + ATP + H2O = Mg-protoporphyrin IX + ADP + phosphate + 3 H(+)</text>
        <dbReference type="Rhea" id="RHEA:13961"/>
        <dbReference type="ChEBI" id="CHEBI:15377"/>
        <dbReference type="ChEBI" id="CHEBI:15378"/>
        <dbReference type="ChEBI" id="CHEBI:18420"/>
        <dbReference type="ChEBI" id="CHEBI:30616"/>
        <dbReference type="ChEBI" id="CHEBI:43474"/>
        <dbReference type="ChEBI" id="CHEBI:57306"/>
        <dbReference type="ChEBI" id="CHEBI:60492"/>
        <dbReference type="ChEBI" id="CHEBI:456216"/>
        <dbReference type="EC" id="6.6.1.1"/>
    </reaction>
</comment>
<comment type="pathway">
    <text>Porphyrin-containing compound metabolism; bacteriochlorophyll biosynthesis (light-independent).</text>
</comment>
<comment type="similarity">
    <text evidence="1">Belongs to the Mg-chelatase subunit H family.</text>
</comment>
<evidence type="ECO:0000305" key="1"/>
<dbReference type="EC" id="6.6.1.1"/>
<dbReference type="EMBL" id="AF195122">
    <property type="protein sequence ID" value="AAF24273.1"/>
    <property type="molecule type" value="Genomic_DNA"/>
</dbReference>
<dbReference type="EMBL" id="CP000143">
    <property type="protein sequence ID" value="ABA79460.1"/>
    <property type="molecule type" value="Genomic_DNA"/>
</dbReference>
<dbReference type="PIR" id="T50729">
    <property type="entry name" value="T50729"/>
</dbReference>
<dbReference type="RefSeq" id="WP_011338125.1">
    <property type="nucleotide sequence ID" value="NC_007493.2"/>
</dbReference>
<dbReference type="RefSeq" id="YP_353361.1">
    <property type="nucleotide sequence ID" value="NC_007493.2"/>
</dbReference>
<dbReference type="SMR" id="Q9RFD5"/>
<dbReference type="STRING" id="272943.RSP_0287"/>
<dbReference type="EnsemblBacteria" id="ABA79460">
    <property type="protein sequence ID" value="ABA79460"/>
    <property type="gene ID" value="RSP_0287"/>
</dbReference>
<dbReference type="GeneID" id="3719199"/>
<dbReference type="KEGG" id="rsp:RSP_0287"/>
<dbReference type="PATRIC" id="fig|272943.9.peg.2231"/>
<dbReference type="eggNOG" id="COG1429">
    <property type="taxonomic scope" value="Bacteria"/>
</dbReference>
<dbReference type="OrthoDB" id="9757976at2"/>
<dbReference type="PhylomeDB" id="Q9RFD5"/>
<dbReference type="BioCyc" id="MetaCyc:MONOMER-13264"/>
<dbReference type="UniPathway" id="UPA00671"/>
<dbReference type="Proteomes" id="UP000002703">
    <property type="component" value="Chromosome 1"/>
</dbReference>
<dbReference type="GO" id="GO:0005524">
    <property type="term" value="F:ATP binding"/>
    <property type="evidence" value="ECO:0007669"/>
    <property type="project" value="UniProtKB-KW"/>
</dbReference>
<dbReference type="GO" id="GO:0016851">
    <property type="term" value="F:magnesium chelatase activity"/>
    <property type="evidence" value="ECO:0007669"/>
    <property type="project" value="UniProtKB-EC"/>
</dbReference>
<dbReference type="GO" id="GO:0036070">
    <property type="term" value="P:light-independent bacteriochlorophyll biosynthetic process"/>
    <property type="evidence" value="ECO:0007669"/>
    <property type="project" value="UniProtKB-UniPathway"/>
</dbReference>
<dbReference type="GO" id="GO:0015979">
    <property type="term" value="P:photosynthesis"/>
    <property type="evidence" value="ECO:0007669"/>
    <property type="project" value="UniProtKB-KW"/>
</dbReference>
<dbReference type="CDD" id="cd10150">
    <property type="entry name" value="CobN_like"/>
    <property type="match status" value="1"/>
</dbReference>
<dbReference type="InterPro" id="IPR003672">
    <property type="entry name" value="CobN/Mg_chltase"/>
</dbReference>
<dbReference type="InterPro" id="IPR022571">
    <property type="entry name" value="Mg_chelatase_H_N"/>
</dbReference>
<dbReference type="NCBIfam" id="NF009942">
    <property type="entry name" value="PRK13405.1"/>
    <property type="match status" value="1"/>
</dbReference>
<dbReference type="PANTHER" id="PTHR44119">
    <property type="entry name" value="MAGNESIUM-CHELATASE SUBUNIT CHLH, CHLOROPLASTIC"/>
    <property type="match status" value="1"/>
</dbReference>
<dbReference type="PANTHER" id="PTHR44119:SF1">
    <property type="entry name" value="MAGNESIUM-CHELATASE SUBUNIT CHLH, CHLOROPLASTIC"/>
    <property type="match status" value="1"/>
</dbReference>
<dbReference type="Pfam" id="PF02514">
    <property type="entry name" value="CobN-Mg_chel"/>
    <property type="match status" value="2"/>
</dbReference>
<dbReference type="Pfam" id="PF11965">
    <property type="entry name" value="DUF3479"/>
    <property type="match status" value="1"/>
</dbReference>
<gene>
    <name type="primary">bchH</name>
    <name type="ordered locus">RHOS4_18920</name>
    <name type="ORF">RSP_0287</name>
</gene>
<protein>
    <recommendedName>
        <fullName>Magnesium-chelatase subunit H</fullName>
        <ecNumber>6.6.1.1</ecNumber>
    </recommendedName>
    <alternativeName>
        <fullName>Mg-protoporphyrin IX chelatase subunit H</fullName>
    </alternativeName>
</protein>
<accession>Q9RFD5</accession>
<accession>Q3J174</accession>
<reference key="1">
    <citation type="journal article" date="2000" name="Nucleic Acids Res.">
        <title>DNA sequence analysis of the photosynthesis region of Rhodobacter sphaeroides 2.4.1.</title>
        <authorList>
            <person name="Choudhary M."/>
            <person name="Kaplan S."/>
        </authorList>
    </citation>
    <scope>NUCLEOTIDE SEQUENCE [GENOMIC DNA]</scope>
</reference>
<reference key="2">
    <citation type="submission" date="2005-09" db="EMBL/GenBank/DDBJ databases">
        <title>Complete sequence of chromosome 1 of Rhodobacter sphaeroides 2.4.1.</title>
        <authorList>
            <person name="Copeland A."/>
            <person name="Lucas S."/>
            <person name="Lapidus A."/>
            <person name="Barry K."/>
            <person name="Detter J.C."/>
            <person name="Glavina T."/>
            <person name="Hammon N."/>
            <person name="Israni S."/>
            <person name="Pitluck S."/>
            <person name="Richardson P."/>
            <person name="Mackenzie C."/>
            <person name="Choudhary M."/>
            <person name="Larimer F."/>
            <person name="Hauser L.J."/>
            <person name="Land M."/>
            <person name="Donohue T.J."/>
            <person name="Kaplan S."/>
        </authorList>
    </citation>
    <scope>NUCLEOTIDE SEQUENCE [LARGE SCALE GENOMIC DNA]</scope>
    <source>
        <strain>ATCC 17023 / DSM 158 / JCM 6121 / CCUG 31486 / LMG 2827 / NBRC 12203 / NCIMB 8253 / ATH 2.4.1.</strain>
    </source>
</reference>
<name>BCHH_CERS4</name>
<organism>
    <name type="scientific">Cereibacter sphaeroides (strain ATCC 17023 / DSM 158 / JCM 6121 / CCUG 31486 / LMG 2827 / NBRC 12203 / NCIMB 8253 / ATH 2.4.1.)</name>
    <name type="common">Rhodobacter sphaeroides</name>
    <dbReference type="NCBI Taxonomy" id="272943"/>
    <lineage>
        <taxon>Bacteria</taxon>
        <taxon>Pseudomonadati</taxon>
        <taxon>Pseudomonadota</taxon>
        <taxon>Alphaproteobacteria</taxon>
        <taxon>Rhodobacterales</taxon>
        <taxon>Paracoccaceae</taxon>
        <taxon>Cereibacter</taxon>
    </lineage>
</organism>
<feature type="chain" id="PRO_0000219886" description="Magnesium-chelatase subunit H">
    <location>
        <begin position="1"/>
        <end position="1193"/>
    </location>
</feature>
<keyword id="KW-0067">ATP-binding</keyword>
<keyword id="KW-0077">Bacteriochlorophyll biosynthesis</keyword>
<keyword id="KW-0149">Chlorophyll biosynthesis</keyword>
<keyword id="KW-0436">Ligase</keyword>
<keyword id="KW-0547">Nucleotide-binding</keyword>
<keyword id="KW-0602">Photosynthesis</keyword>
<keyword id="KW-1185">Reference proteome</keyword>